<comment type="cofactor">
    <cofactor evidence="1">
        <name>Zn(2+)</name>
        <dbReference type="ChEBI" id="CHEBI:29105"/>
    </cofactor>
    <cofactor evidence="1">
        <name>Co(2+)</name>
        <dbReference type="ChEBI" id="CHEBI:48828"/>
    </cofactor>
    <text evidence="1">Binds 2 Zn(2+) or Co(2+) ions per subunit.</text>
</comment>
<comment type="similarity">
    <text evidence="2">Belongs to the peptidase M20A family.</text>
</comment>
<gene>
    <name type="ordered locus">MJ0457</name>
</gene>
<organism>
    <name type="scientific">Methanocaldococcus jannaschii (strain ATCC 43067 / DSM 2661 / JAL-1 / JCM 10045 / NBRC 100440)</name>
    <name type="common">Methanococcus jannaschii</name>
    <dbReference type="NCBI Taxonomy" id="243232"/>
    <lineage>
        <taxon>Archaea</taxon>
        <taxon>Methanobacteriati</taxon>
        <taxon>Methanobacteriota</taxon>
        <taxon>Methanomada group</taxon>
        <taxon>Methanococci</taxon>
        <taxon>Methanococcales</taxon>
        <taxon>Methanocaldococcaceae</taxon>
        <taxon>Methanocaldococcus</taxon>
    </lineage>
</organism>
<protein>
    <recommendedName>
        <fullName>Uncharacterized metallohydrolase MJ0457</fullName>
        <ecNumber>3.-.-.-</ecNumber>
    </recommendedName>
</protein>
<sequence length="410" mass="47170">MDLIEEAIKLESDLIRINSVNPSFGGKGEKEKAEYVKKKLMEYVESYNIENYTLKEYNIIDKYGIERPNIVFKIDFGRDKTLHIISHLDTVPEGDISLWGTNPYEPVIKDGKIYGRGSEDNHKGIVSSLLLLKMIFENNIEPKYNLSLIFVSDEEDGSEYGLKYLLNNFEDEIFKKDDLIIVPDFGTPTGEFVEIGEKGILWIKFNIKGKQCHGSTPENGLNADIVAFNFANELYNGLYEKFDEINSIFLPEYSTFEPTILKNKVENPNTIPGYVEVVFDCRILPTYKIEEVLEFINKFIKNFEFKKYIKHYDNSIKAEITYEILKSENPNYTDENAEIIKELKKAIKNVLNRDAKLCGMGGGTVAAFLRYKGYNVAVWGIGEETAHQPNEHIKIEDLVKMAEVFYEILK</sequence>
<name>Y457_METJA</name>
<reference key="1">
    <citation type="journal article" date="1996" name="Science">
        <title>Complete genome sequence of the methanogenic archaeon, Methanococcus jannaschii.</title>
        <authorList>
            <person name="Bult C.J."/>
            <person name="White O."/>
            <person name="Olsen G.J."/>
            <person name="Zhou L."/>
            <person name="Fleischmann R.D."/>
            <person name="Sutton G.G."/>
            <person name="Blake J.A."/>
            <person name="FitzGerald L.M."/>
            <person name="Clayton R.A."/>
            <person name="Gocayne J.D."/>
            <person name="Kerlavage A.R."/>
            <person name="Dougherty B.A."/>
            <person name="Tomb J.-F."/>
            <person name="Adams M.D."/>
            <person name="Reich C.I."/>
            <person name="Overbeek R."/>
            <person name="Kirkness E.F."/>
            <person name="Weinstock K.G."/>
            <person name="Merrick J.M."/>
            <person name="Glodek A."/>
            <person name="Scott J.L."/>
            <person name="Geoghagen N.S.M."/>
            <person name="Weidman J.F."/>
            <person name="Fuhrmann J.L."/>
            <person name="Nguyen D."/>
            <person name="Utterback T.R."/>
            <person name="Kelley J.M."/>
            <person name="Peterson J.D."/>
            <person name="Sadow P.W."/>
            <person name="Hanna M.C."/>
            <person name="Cotton M.D."/>
            <person name="Roberts K.M."/>
            <person name="Hurst M.A."/>
            <person name="Kaine B.P."/>
            <person name="Borodovsky M."/>
            <person name="Klenk H.-P."/>
            <person name="Fraser C.M."/>
            <person name="Smith H.O."/>
            <person name="Woese C.R."/>
            <person name="Venter J.C."/>
        </authorList>
    </citation>
    <scope>NUCLEOTIDE SEQUENCE [LARGE SCALE GENOMIC DNA]</scope>
    <source>
        <strain>ATCC 43067 / DSM 2661 / JAL-1 / JCM 10045 / NBRC 100440</strain>
    </source>
</reference>
<proteinExistence type="inferred from homology"/>
<feature type="chain" id="PRO_0000185352" description="Uncharacterized metallohydrolase MJ0457">
    <location>
        <begin position="1"/>
        <end position="410"/>
    </location>
</feature>
<feature type="active site" evidence="1">
    <location>
        <position position="89"/>
    </location>
</feature>
<feature type="active site" description="Proton acceptor" evidence="1">
    <location>
        <position position="154"/>
    </location>
</feature>
<feature type="binding site" evidence="1">
    <location>
        <position position="87"/>
    </location>
    <ligand>
        <name>Zn(2+)</name>
        <dbReference type="ChEBI" id="CHEBI:29105"/>
        <label>1</label>
    </ligand>
</feature>
<feature type="binding site" evidence="1">
    <location>
        <position position="120"/>
    </location>
    <ligand>
        <name>Zn(2+)</name>
        <dbReference type="ChEBI" id="CHEBI:29105"/>
        <label>1</label>
    </ligand>
</feature>
<feature type="binding site" evidence="1">
    <location>
        <position position="120"/>
    </location>
    <ligand>
        <name>Zn(2+)</name>
        <dbReference type="ChEBI" id="CHEBI:29105"/>
        <label>2</label>
    </ligand>
</feature>
<feature type="binding site" evidence="1">
    <location>
        <position position="155"/>
    </location>
    <ligand>
        <name>Zn(2+)</name>
        <dbReference type="ChEBI" id="CHEBI:29105"/>
        <label>2</label>
    </ligand>
</feature>
<feature type="binding site" evidence="1">
    <location>
        <position position="184"/>
    </location>
    <ligand>
        <name>Zn(2+)</name>
        <dbReference type="ChEBI" id="CHEBI:29105"/>
        <label>1</label>
    </ligand>
</feature>
<feature type="binding site" evidence="1">
    <location>
        <position position="387"/>
    </location>
    <ligand>
        <name>Zn(2+)</name>
        <dbReference type="ChEBI" id="CHEBI:29105"/>
        <label>2</label>
    </ligand>
</feature>
<dbReference type="EC" id="3.-.-.-"/>
<dbReference type="EMBL" id="L77117">
    <property type="protein sequence ID" value="AAB98445.1"/>
    <property type="molecule type" value="Genomic_DNA"/>
</dbReference>
<dbReference type="PIR" id="A64357">
    <property type="entry name" value="A64357"/>
</dbReference>
<dbReference type="RefSeq" id="WP_010869956.1">
    <property type="nucleotide sequence ID" value="NC_000909.1"/>
</dbReference>
<dbReference type="SMR" id="Q57899"/>
<dbReference type="FunCoup" id="Q57899">
    <property type="interactions" value="120"/>
</dbReference>
<dbReference type="STRING" id="243232.MJ_0457"/>
<dbReference type="PaxDb" id="243232-MJ_0457"/>
<dbReference type="EnsemblBacteria" id="AAB98445">
    <property type="protein sequence ID" value="AAB98445"/>
    <property type="gene ID" value="MJ_0457"/>
</dbReference>
<dbReference type="GeneID" id="1451318"/>
<dbReference type="KEGG" id="mja:MJ_0457"/>
<dbReference type="eggNOG" id="arCOG01107">
    <property type="taxonomic scope" value="Archaea"/>
</dbReference>
<dbReference type="HOGENOM" id="CLU_021802_2_2_2"/>
<dbReference type="InParanoid" id="Q57899"/>
<dbReference type="OrthoDB" id="24854at2157"/>
<dbReference type="PhylomeDB" id="Q57899"/>
<dbReference type="Proteomes" id="UP000000805">
    <property type="component" value="Chromosome"/>
</dbReference>
<dbReference type="GO" id="GO:0008777">
    <property type="term" value="F:acetylornithine deacetylase activity"/>
    <property type="evidence" value="ECO:0000318"/>
    <property type="project" value="GO_Central"/>
</dbReference>
<dbReference type="GO" id="GO:0046872">
    <property type="term" value="F:metal ion binding"/>
    <property type="evidence" value="ECO:0007669"/>
    <property type="project" value="UniProtKB-KW"/>
</dbReference>
<dbReference type="GO" id="GO:0006592">
    <property type="term" value="P:ornithine biosynthetic process"/>
    <property type="evidence" value="ECO:0000318"/>
    <property type="project" value="GO_Central"/>
</dbReference>
<dbReference type="CDD" id="cd05650">
    <property type="entry name" value="M20_ArgE_DapE-like"/>
    <property type="match status" value="1"/>
</dbReference>
<dbReference type="Gene3D" id="3.30.70.360">
    <property type="match status" value="1"/>
</dbReference>
<dbReference type="Gene3D" id="3.40.630.10">
    <property type="entry name" value="Zn peptidases"/>
    <property type="match status" value="2"/>
</dbReference>
<dbReference type="InterPro" id="IPR010182">
    <property type="entry name" value="ArgE/DapE"/>
</dbReference>
<dbReference type="InterPro" id="IPR036264">
    <property type="entry name" value="Bact_exopeptidase_dim_dom"/>
</dbReference>
<dbReference type="InterPro" id="IPR002933">
    <property type="entry name" value="Peptidase_M20"/>
</dbReference>
<dbReference type="InterPro" id="IPR011650">
    <property type="entry name" value="Peptidase_M20_dimer"/>
</dbReference>
<dbReference type="InterPro" id="IPR050072">
    <property type="entry name" value="Peptidase_M20A"/>
</dbReference>
<dbReference type="NCBIfam" id="TIGR01910">
    <property type="entry name" value="DapE-ArgE"/>
    <property type="match status" value="1"/>
</dbReference>
<dbReference type="NCBIfam" id="NF010589">
    <property type="entry name" value="PRK13983.1"/>
    <property type="match status" value="1"/>
</dbReference>
<dbReference type="PANTHER" id="PTHR43808">
    <property type="entry name" value="ACETYLORNITHINE DEACETYLASE"/>
    <property type="match status" value="1"/>
</dbReference>
<dbReference type="PANTHER" id="PTHR43808:SF32">
    <property type="entry name" value="ARGE_DAPE-RELATED DEACYLASE"/>
    <property type="match status" value="1"/>
</dbReference>
<dbReference type="Pfam" id="PF07687">
    <property type="entry name" value="M20_dimer"/>
    <property type="match status" value="1"/>
</dbReference>
<dbReference type="Pfam" id="PF01546">
    <property type="entry name" value="Peptidase_M20"/>
    <property type="match status" value="1"/>
</dbReference>
<dbReference type="SUPFAM" id="SSF55031">
    <property type="entry name" value="Bacterial exopeptidase dimerisation domain"/>
    <property type="match status" value="1"/>
</dbReference>
<dbReference type="SUPFAM" id="SSF53187">
    <property type="entry name" value="Zn-dependent exopeptidases"/>
    <property type="match status" value="1"/>
</dbReference>
<accession>Q57899</accession>
<keyword id="KW-0170">Cobalt</keyword>
<keyword id="KW-0378">Hydrolase</keyword>
<keyword id="KW-0479">Metal-binding</keyword>
<keyword id="KW-1185">Reference proteome</keyword>
<keyword id="KW-0862">Zinc</keyword>
<evidence type="ECO:0000250" key="1"/>
<evidence type="ECO:0000305" key="2"/>